<gene>
    <name evidence="1" type="primary">rplL</name>
    <name type="ordered locus">CLD_1015</name>
</gene>
<feature type="chain" id="PRO_1000121416" description="Large ribosomal subunit protein bL12">
    <location>
        <begin position="1"/>
        <end position="123"/>
    </location>
</feature>
<comment type="function">
    <text evidence="1">Forms part of the ribosomal stalk which helps the ribosome interact with GTP-bound translation factors. Is thus essential for accurate translation.</text>
</comment>
<comment type="subunit">
    <text evidence="1">Homodimer. Part of the ribosomal stalk of the 50S ribosomal subunit. Forms a multimeric L10(L12)X complex, where L10 forms an elongated spine to which 2 to 4 L12 dimers bind in a sequential fashion. Binds GTP-bound translation factors.</text>
</comment>
<comment type="similarity">
    <text evidence="1">Belongs to the bacterial ribosomal protein bL12 family.</text>
</comment>
<dbReference type="EMBL" id="CP000939">
    <property type="protein sequence ID" value="ACA45954.1"/>
    <property type="molecule type" value="Genomic_DNA"/>
</dbReference>
<dbReference type="RefSeq" id="WP_003357259.1">
    <property type="nucleotide sequence ID" value="NC_010516.1"/>
</dbReference>
<dbReference type="SMR" id="B1IGG3"/>
<dbReference type="GeneID" id="92940259"/>
<dbReference type="KEGG" id="cbb:CLD_1015"/>
<dbReference type="HOGENOM" id="CLU_086499_3_2_9"/>
<dbReference type="Proteomes" id="UP000008541">
    <property type="component" value="Chromosome"/>
</dbReference>
<dbReference type="GO" id="GO:0022625">
    <property type="term" value="C:cytosolic large ribosomal subunit"/>
    <property type="evidence" value="ECO:0007669"/>
    <property type="project" value="TreeGrafter"/>
</dbReference>
<dbReference type="GO" id="GO:0003729">
    <property type="term" value="F:mRNA binding"/>
    <property type="evidence" value="ECO:0007669"/>
    <property type="project" value="TreeGrafter"/>
</dbReference>
<dbReference type="GO" id="GO:0003735">
    <property type="term" value="F:structural constituent of ribosome"/>
    <property type="evidence" value="ECO:0007669"/>
    <property type="project" value="InterPro"/>
</dbReference>
<dbReference type="GO" id="GO:0006412">
    <property type="term" value="P:translation"/>
    <property type="evidence" value="ECO:0007669"/>
    <property type="project" value="UniProtKB-UniRule"/>
</dbReference>
<dbReference type="CDD" id="cd00387">
    <property type="entry name" value="Ribosomal_L7_L12"/>
    <property type="match status" value="1"/>
</dbReference>
<dbReference type="FunFam" id="1.20.5.710:FF:000002">
    <property type="entry name" value="50S ribosomal protein L7/L12"/>
    <property type="match status" value="1"/>
</dbReference>
<dbReference type="FunFam" id="3.30.1390.10:FF:000001">
    <property type="entry name" value="50S ribosomal protein L7/L12"/>
    <property type="match status" value="1"/>
</dbReference>
<dbReference type="Gene3D" id="3.30.1390.10">
    <property type="match status" value="1"/>
</dbReference>
<dbReference type="Gene3D" id="1.20.5.710">
    <property type="entry name" value="Single helix bin"/>
    <property type="match status" value="1"/>
</dbReference>
<dbReference type="HAMAP" id="MF_00368">
    <property type="entry name" value="Ribosomal_bL12"/>
    <property type="match status" value="1"/>
</dbReference>
<dbReference type="InterPro" id="IPR000206">
    <property type="entry name" value="Ribosomal_bL12"/>
</dbReference>
<dbReference type="InterPro" id="IPR013823">
    <property type="entry name" value="Ribosomal_bL12_C"/>
</dbReference>
<dbReference type="InterPro" id="IPR014719">
    <property type="entry name" value="Ribosomal_bL12_C/ClpS-like"/>
</dbReference>
<dbReference type="InterPro" id="IPR008932">
    <property type="entry name" value="Ribosomal_bL12_oligo"/>
</dbReference>
<dbReference type="InterPro" id="IPR036235">
    <property type="entry name" value="Ribosomal_bL12_oligo_N_sf"/>
</dbReference>
<dbReference type="NCBIfam" id="TIGR00855">
    <property type="entry name" value="L12"/>
    <property type="match status" value="1"/>
</dbReference>
<dbReference type="PANTHER" id="PTHR45987">
    <property type="entry name" value="39S RIBOSOMAL PROTEIN L12"/>
    <property type="match status" value="1"/>
</dbReference>
<dbReference type="PANTHER" id="PTHR45987:SF4">
    <property type="entry name" value="LARGE RIBOSOMAL SUBUNIT PROTEIN BL12M"/>
    <property type="match status" value="1"/>
</dbReference>
<dbReference type="Pfam" id="PF00542">
    <property type="entry name" value="Ribosomal_L12"/>
    <property type="match status" value="1"/>
</dbReference>
<dbReference type="Pfam" id="PF16320">
    <property type="entry name" value="Ribosomal_L12_N"/>
    <property type="match status" value="1"/>
</dbReference>
<dbReference type="SUPFAM" id="SSF54736">
    <property type="entry name" value="ClpS-like"/>
    <property type="match status" value="1"/>
</dbReference>
<dbReference type="SUPFAM" id="SSF48300">
    <property type="entry name" value="Ribosomal protein L7/12, oligomerisation (N-terminal) domain"/>
    <property type="match status" value="1"/>
</dbReference>
<sequence>MKKEEIIQAIKEMTVLELNELVEACEEEFGVSAAAPVAVAGAGAAAGAGAAEEKTEFDVVLADAGSEKIKVIKAVREVTGLGLKEAKALVDGAPKTLKEAASKEDGEAIKAKLEEVGAKVELK</sequence>
<keyword id="KW-0687">Ribonucleoprotein</keyword>
<keyword id="KW-0689">Ribosomal protein</keyword>
<organism>
    <name type="scientific">Clostridium botulinum (strain Okra / Type B1)</name>
    <dbReference type="NCBI Taxonomy" id="498213"/>
    <lineage>
        <taxon>Bacteria</taxon>
        <taxon>Bacillati</taxon>
        <taxon>Bacillota</taxon>
        <taxon>Clostridia</taxon>
        <taxon>Eubacteriales</taxon>
        <taxon>Clostridiaceae</taxon>
        <taxon>Clostridium</taxon>
    </lineage>
</organism>
<proteinExistence type="inferred from homology"/>
<reference key="1">
    <citation type="journal article" date="2007" name="PLoS ONE">
        <title>Analysis of the neurotoxin complex genes in Clostridium botulinum A1-A4 and B1 strains: BoNT/A3, /Ba4 and /B1 clusters are located within plasmids.</title>
        <authorList>
            <person name="Smith T.J."/>
            <person name="Hill K.K."/>
            <person name="Foley B.T."/>
            <person name="Detter J.C."/>
            <person name="Munk A.C."/>
            <person name="Bruce D.C."/>
            <person name="Doggett N.A."/>
            <person name="Smith L.A."/>
            <person name="Marks J.D."/>
            <person name="Xie G."/>
            <person name="Brettin T.S."/>
        </authorList>
    </citation>
    <scope>NUCLEOTIDE SEQUENCE [LARGE SCALE GENOMIC DNA]</scope>
    <source>
        <strain>Okra / Type B1</strain>
    </source>
</reference>
<name>RL7_CLOBK</name>
<accession>B1IGG3</accession>
<protein>
    <recommendedName>
        <fullName evidence="1">Large ribosomal subunit protein bL12</fullName>
    </recommendedName>
    <alternativeName>
        <fullName evidence="2">50S ribosomal protein L7/L12</fullName>
    </alternativeName>
</protein>
<evidence type="ECO:0000255" key="1">
    <source>
        <dbReference type="HAMAP-Rule" id="MF_00368"/>
    </source>
</evidence>
<evidence type="ECO:0000305" key="2"/>